<reference key="1">
    <citation type="journal article" date="2011" name="MBio">
        <title>Novel metabolic attributes of the genus Cyanothece, comprising a group of unicellular nitrogen-fixing Cyanobacteria.</title>
        <authorList>
            <person name="Bandyopadhyay A."/>
            <person name="Elvitigala T."/>
            <person name="Welsh E."/>
            <person name="Stockel J."/>
            <person name="Liberton M."/>
            <person name="Min H."/>
            <person name="Sherman L.A."/>
            <person name="Pakrasi H.B."/>
        </authorList>
    </citation>
    <scope>NUCLEOTIDE SEQUENCE [LARGE SCALE GENOMIC DNA]</scope>
    <source>
        <strain>PCC 7424</strain>
    </source>
</reference>
<dbReference type="EC" id="6.3.2.8" evidence="1"/>
<dbReference type="EMBL" id="CP001291">
    <property type="protein sequence ID" value="ACK70644.1"/>
    <property type="molecule type" value="Genomic_DNA"/>
</dbReference>
<dbReference type="RefSeq" id="WP_015954249.1">
    <property type="nucleotide sequence ID" value="NC_011729.1"/>
</dbReference>
<dbReference type="SMR" id="B7KHE9"/>
<dbReference type="STRING" id="65393.PCC7424_2222"/>
<dbReference type="KEGG" id="cyc:PCC7424_2222"/>
<dbReference type="eggNOG" id="COG0773">
    <property type="taxonomic scope" value="Bacteria"/>
</dbReference>
<dbReference type="HOGENOM" id="CLU_028104_2_2_3"/>
<dbReference type="OrthoDB" id="9804126at2"/>
<dbReference type="UniPathway" id="UPA00219"/>
<dbReference type="Proteomes" id="UP000002384">
    <property type="component" value="Chromosome"/>
</dbReference>
<dbReference type="GO" id="GO:0005737">
    <property type="term" value="C:cytoplasm"/>
    <property type="evidence" value="ECO:0007669"/>
    <property type="project" value="UniProtKB-SubCell"/>
</dbReference>
<dbReference type="GO" id="GO:0005524">
    <property type="term" value="F:ATP binding"/>
    <property type="evidence" value="ECO:0007669"/>
    <property type="project" value="UniProtKB-UniRule"/>
</dbReference>
<dbReference type="GO" id="GO:0008763">
    <property type="term" value="F:UDP-N-acetylmuramate-L-alanine ligase activity"/>
    <property type="evidence" value="ECO:0007669"/>
    <property type="project" value="UniProtKB-UniRule"/>
</dbReference>
<dbReference type="GO" id="GO:0051301">
    <property type="term" value="P:cell division"/>
    <property type="evidence" value="ECO:0007669"/>
    <property type="project" value="UniProtKB-KW"/>
</dbReference>
<dbReference type="GO" id="GO:0071555">
    <property type="term" value="P:cell wall organization"/>
    <property type="evidence" value="ECO:0007669"/>
    <property type="project" value="UniProtKB-KW"/>
</dbReference>
<dbReference type="GO" id="GO:0009252">
    <property type="term" value="P:peptidoglycan biosynthetic process"/>
    <property type="evidence" value="ECO:0007669"/>
    <property type="project" value="UniProtKB-UniRule"/>
</dbReference>
<dbReference type="GO" id="GO:0008360">
    <property type="term" value="P:regulation of cell shape"/>
    <property type="evidence" value="ECO:0007669"/>
    <property type="project" value="UniProtKB-KW"/>
</dbReference>
<dbReference type="Gene3D" id="3.90.190.20">
    <property type="entry name" value="Mur ligase, C-terminal domain"/>
    <property type="match status" value="1"/>
</dbReference>
<dbReference type="Gene3D" id="3.40.1190.10">
    <property type="entry name" value="Mur-like, catalytic domain"/>
    <property type="match status" value="1"/>
</dbReference>
<dbReference type="Gene3D" id="3.40.50.720">
    <property type="entry name" value="NAD(P)-binding Rossmann-like Domain"/>
    <property type="match status" value="1"/>
</dbReference>
<dbReference type="HAMAP" id="MF_00046">
    <property type="entry name" value="MurC"/>
    <property type="match status" value="1"/>
</dbReference>
<dbReference type="InterPro" id="IPR036565">
    <property type="entry name" value="Mur-like_cat_sf"/>
</dbReference>
<dbReference type="InterPro" id="IPR004101">
    <property type="entry name" value="Mur_ligase_C"/>
</dbReference>
<dbReference type="InterPro" id="IPR036615">
    <property type="entry name" value="Mur_ligase_C_dom_sf"/>
</dbReference>
<dbReference type="InterPro" id="IPR013221">
    <property type="entry name" value="Mur_ligase_cen"/>
</dbReference>
<dbReference type="InterPro" id="IPR000713">
    <property type="entry name" value="Mur_ligase_N"/>
</dbReference>
<dbReference type="InterPro" id="IPR050061">
    <property type="entry name" value="MurCDEF_pg_biosynth"/>
</dbReference>
<dbReference type="InterPro" id="IPR005758">
    <property type="entry name" value="UDP-N-AcMur_Ala_ligase_MurC"/>
</dbReference>
<dbReference type="NCBIfam" id="TIGR01082">
    <property type="entry name" value="murC"/>
    <property type="match status" value="1"/>
</dbReference>
<dbReference type="PANTHER" id="PTHR43445:SF3">
    <property type="entry name" value="UDP-N-ACETYLMURAMATE--L-ALANINE LIGASE"/>
    <property type="match status" value="1"/>
</dbReference>
<dbReference type="PANTHER" id="PTHR43445">
    <property type="entry name" value="UDP-N-ACETYLMURAMATE--L-ALANINE LIGASE-RELATED"/>
    <property type="match status" value="1"/>
</dbReference>
<dbReference type="Pfam" id="PF01225">
    <property type="entry name" value="Mur_ligase"/>
    <property type="match status" value="1"/>
</dbReference>
<dbReference type="Pfam" id="PF02875">
    <property type="entry name" value="Mur_ligase_C"/>
    <property type="match status" value="1"/>
</dbReference>
<dbReference type="Pfam" id="PF08245">
    <property type="entry name" value="Mur_ligase_M"/>
    <property type="match status" value="1"/>
</dbReference>
<dbReference type="SUPFAM" id="SSF51984">
    <property type="entry name" value="MurCD N-terminal domain"/>
    <property type="match status" value="1"/>
</dbReference>
<dbReference type="SUPFAM" id="SSF53623">
    <property type="entry name" value="MurD-like peptide ligases, catalytic domain"/>
    <property type="match status" value="1"/>
</dbReference>
<dbReference type="SUPFAM" id="SSF53244">
    <property type="entry name" value="MurD-like peptide ligases, peptide-binding domain"/>
    <property type="match status" value="1"/>
</dbReference>
<comment type="function">
    <text evidence="1">Cell wall formation.</text>
</comment>
<comment type="catalytic activity">
    <reaction evidence="1">
        <text>UDP-N-acetyl-alpha-D-muramate + L-alanine + ATP = UDP-N-acetyl-alpha-D-muramoyl-L-alanine + ADP + phosphate + H(+)</text>
        <dbReference type="Rhea" id="RHEA:23372"/>
        <dbReference type="ChEBI" id="CHEBI:15378"/>
        <dbReference type="ChEBI" id="CHEBI:30616"/>
        <dbReference type="ChEBI" id="CHEBI:43474"/>
        <dbReference type="ChEBI" id="CHEBI:57972"/>
        <dbReference type="ChEBI" id="CHEBI:70757"/>
        <dbReference type="ChEBI" id="CHEBI:83898"/>
        <dbReference type="ChEBI" id="CHEBI:456216"/>
        <dbReference type="EC" id="6.3.2.8"/>
    </reaction>
</comment>
<comment type="pathway">
    <text evidence="1">Cell wall biogenesis; peptidoglycan biosynthesis.</text>
</comment>
<comment type="subcellular location">
    <subcellularLocation>
        <location evidence="1">Cytoplasm</location>
    </subcellularLocation>
</comment>
<comment type="similarity">
    <text evidence="1">Belongs to the MurCDEF family.</text>
</comment>
<sequence length="495" mass="54174">MVKTVDFNGRPFHFIGIGGIGMSGLAYILAKRHLPVSGSDVRSSHITQRLQSVGAKVFNTQEATNLTIFQPTPEDSLTTLIPCASGESKKVEKTHQADSALSPNSLPQIICSTAIADNNSEYQAAKELGYPIFHRSDVLAALIKDYYSIGVAGTHGKTTTSSLIGYMLLGGGLDPTIIVGGEVDAWDGNARLGQGQFLVAEVDESDGSLTKHSPRIGIITNIELDHPDHYQTLDEVVKTFQIFEQQCETLIACIDCKTVRTHFKPQITYSLDPDREADYTVKNVTYKTDGSMAEVWEKGQYLGQMHISLLGQHNISNALAAVAVGRTLGLDFEVIASGIATFIGAKRRFEHKGYSQGITFIDDYAHHPSEVRCTLEAARLRLDQDRYRRVVAIFQPHRYSRTATFMDEFATSFDDADVVIVTDIYSAGEVNIGQISGQQVADAISRHHQQVFYHPSLKSLGSFLSQILEPGDLALFLGAGNLNQIIPELISPKVA</sequence>
<name>MURC_GLOC7</name>
<feature type="chain" id="PRO_1000192090" description="UDP-N-acetylmuramate--L-alanine ligase">
    <location>
        <begin position="1"/>
        <end position="495"/>
    </location>
</feature>
<feature type="binding site" evidence="1">
    <location>
        <begin position="153"/>
        <end position="159"/>
    </location>
    <ligand>
        <name>ATP</name>
        <dbReference type="ChEBI" id="CHEBI:30616"/>
    </ligand>
</feature>
<proteinExistence type="inferred from homology"/>
<evidence type="ECO:0000255" key="1">
    <source>
        <dbReference type="HAMAP-Rule" id="MF_00046"/>
    </source>
</evidence>
<protein>
    <recommendedName>
        <fullName evidence="1">UDP-N-acetylmuramate--L-alanine ligase</fullName>
        <ecNumber evidence="1">6.3.2.8</ecNumber>
    </recommendedName>
    <alternativeName>
        <fullName evidence="1">UDP-N-acetylmuramoyl-L-alanine synthetase</fullName>
    </alternativeName>
</protein>
<organism>
    <name type="scientific">Gloeothece citriformis (strain PCC 7424)</name>
    <name type="common">Cyanothece sp. (strain PCC 7424)</name>
    <dbReference type="NCBI Taxonomy" id="65393"/>
    <lineage>
        <taxon>Bacteria</taxon>
        <taxon>Bacillati</taxon>
        <taxon>Cyanobacteriota</taxon>
        <taxon>Cyanophyceae</taxon>
        <taxon>Oscillatoriophycideae</taxon>
        <taxon>Chroococcales</taxon>
        <taxon>Aphanothecaceae</taxon>
        <taxon>Gloeothece</taxon>
        <taxon>Gloeothece citriformis</taxon>
    </lineage>
</organism>
<keyword id="KW-0067">ATP-binding</keyword>
<keyword id="KW-0131">Cell cycle</keyword>
<keyword id="KW-0132">Cell division</keyword>
<keyword id="KW-0133">Cell shape</keyword>
<keyword id="KW-0961">Cell wall biogenesis/degradation</keyword>
<keyword id="KW-0963">Cytoplasm</keyword>
<keyword id="KW-0436">Ligase</keyword>
<keyword id="KW-0547">Nucleotide-binding</keyword>
<keyword id="KW-0573">Peptidoglycan synthesis</keyword>
<keyword id="KW-1185">Reference proteome</keyword>
<gene>
    <name evidence="1" type="primary">murC</name>
    <name type="ordered locus">PCC7424_2222</name>
</gene>
<accession>B7KHE9</accession>